<keyword id="KW-0068">Autocatalytic cleavage</keyword>
<keyword id="KW-0227">DNA damage</keyword>
<keyword id="KW-0234">DNA repair</keyword>
<keyword id="KW-0235">DNA replication</keyword>
<keyword id="KW-0238">DNA-binding</keyword>
<keyword id="KW-0378">Hydrolase</keyword>
<keyword id="KW-1185">Reference proteome</keyword>
<keyword id="KW-0678">Repressor</keyword>
<keyword id="KW-0742">SOS response</keyword>
<keyword id="KW-0804">Transcription</keyword>
<keyword id="KW-0805">Transcription regulation</keyword>
<comment type="function">
    <text evidence="1">Represses a number of genes involved in the response to DNA damage (SOS response), including recA and lexA. In the presence of single-stranded DNA, RecA interacts with LexA causing an autocatalytic cleavage which disrupts the DNA-binding part of LexA, leading to derepression of the SOS regulon and eventually DNA repair.</text>
</comment>
<comment type="catalytic activity">
    <reaction evidence="1">
        <text>Hydrolysis of Ala-|-Gly bond in repressor LexA.</text>
        <dbReference type="EC" id="3.4.21.88"/>
    </reaction>
</comment>
<comment type="subunit">
    <text evidence="1">Homodimer.</text>
</comment>
<comment type="similarity">
    <text evidence="1">Belongs to the peptidase S24 family.</text>
</comment>
<comment type="sequence caution" evidence="3">
    <conflict type="erroneous initiation">
        <sequence resource="EMBL-CDS" id="ABK02862"/>
    </conflict>
</comment>
<gene>
    <name evidence="1" type="primary">lexA</name>
    <name type="ordered locus">Arth_1468</name>
</gene>
<dbReference type="EC" id="3.4.21.88" evidence="1"/>
<dbReference type="EMBL" id="CP000454">
    <property type="protein sequence ID" value="ABK02862.1"/>
    <property type="status" value="ALT_INIT"/>
    <property type="molecule type" value="Genomic_DNA"/>
</dbReference>
<dbReference type="RefSeq" id="WP_043429618.1">
    <property type="nucleotide sequence ID" value="NC_008541.1"/>
</dbReference>
<dbReference type="SMR" id="A0JUZ2"/>
<dbReference type="STRING" id="290399.Arth_1468"/>
<dbReference type="MEROPS" id="S24.001"/>
<dbReference type="KEGG" id="art:Arth_1468"/>
<dbReference type="eggNOG" id="COG1974">
    <property type="taxonomic scope" value="Bacteria"/>
</dbReference>
<dbReference type="HOGENOM" id="CLU_066192_45_0_11"/>
<dbReference type="OrthoDB" id="9802364at2"/>
<dbReference type="Proteomes" id="UP000000754">
    <property type="component" value="Chromosome"/>
</dbReference>
<dbReference type="GO" id="GO:0003677">
    <property type="term" value="F:DNA binding"/>
    <property type="evidence" value="ECO:0007669"/>
    <property type="project" value="UniProtKB-UniRule"/>
</dbReference>
<dbReference type="GO" id="GO:0004252">
    <property type="term" value="F:serine-type endopeptidase activity"/>
    <property type="evidence" value="ECO:0007669"/>
    <property type="project" value="UniProtKB-UniRule"/>
</dbReference>
<dbReference type="GO" id="GO:0006281">
    <property type="term" value="P:DNA repair"/>
    <property type="evidence" value="ECO:0007669"/>
    <property type="project" value="UniProtKB-UniRule"/>
</dbReference>
<dbReference type="GO" id="GO:0006260">
    <property type="term" value="P:DNA replication"/>
    <property type="evidence" value="ECO:0007669"/>
    <property type="project" value="UniProtKB-UniRule"/>
</dbReference>
<dbReference type="GO" id="GO:0045892">
    <property type="term" value="P:negative regulation of DNA-templated transcription"/>
    <property type="evidence" value="ECO:0007669"/>
    <property type="project" value="UniProtKB-UniRule"/>
</dbReference>
<dbReference type="GO" id="GO:0006508">
    <property type="term" value="P:proteolysis"/>
    <property type="evidence" value="ECO:0007669"/>
    <property type="project" value="InterPro"/>
</dbReference>
<dbReference type="GO" id="GO:0009432">
    <property type="term" value="P:SOS response"/>
    <property type="evidence" value="ECO:0007669"/>
    <property type="project" value="UniProtKB-UniRule"/>
</dbReference>
<dbReference type="CDD" id="cd06529">
    <property type="entry name" value="S24_LexA-like"/>
    <property type="match status" value="1"/>
</dbReference>
<dbReference type="FunFam" id="2.10.109.10:FF:000001">
    <property type="entry name" value="LexA repressor"/>
    <property type="match status" value="1"/>
</dbReference>
<dbReference type="Gene3D" id="2.10.109.10">
    <property type="entry name" value="Umud Fragment, subunit A"/>
    <property type="match status" value="1"/>
</dbReference>
<dbReference type="Gene3D" id="1.10.10.10">
    <property type="entry name" value="Winged helix-like DNA-binding domain superfamily/Winged helix DNA-binding domain"/>
    <property type="match status" value="1"/>
</dbReference>
<dbReference type="HAMAP" id="MF_00015">
    <property type="entry name" value="LexA"/>
    <property type="match status" value="1"/>
</dbReference>
<dbReference type="InterPro" id="IPR006200">
    <property type="entry name" value="LexA"/>
</dbReference>
<dbReference type="InterPro" id="IPR039418">
    <property type="entry name" value="LexA-like"/>
</dbReference>
<dbReference type="InterPro" id="IPR036286">
    <property type="entry name" value="LexA/Signal_pep-like_sf"/>
</dbReference>
<dbReference type="InterPro" id="IPR006199">
    <property type="entry name" value="LexA_DNA-bd_dom"/>
</dbReference>
<dbReference type="InterPro" id="IPR050077">
    <property type="entry name" value="LexA_repressor"/>
</dbReference>
<dbReference type="InterPro" id="IPR006197">
    <property type="entry name" value="Peptidase_S24_LexA"/>
</dbReference>
<dbReference type="InterPro" id="IPR015927">
    <property type="entry name" value="Peptidase_S24_S26A/B/C"/>
</dbReference>
<dbReference type="InterPro" id="IPR036388">
    <property type="entry name" value="WH-like_DNA-bd_sf"/>
</dbReference>
<dbReference type="InterPro" id="IPR036390">
    <property type="entry name" value="WH_DNA-bd_sf"/>
</dbReference>
<dbReference type="NCBIfam" id="TIGR00498">
    <property type="entry name" value="lexA"/>
    <property type="match status" value="1"/>
</dbReference>
<dbReference type="PANTHER" id="PTHR33516">
    <property type="entry name" value="LEXA REPRESSOR"/>
    <property type="match status" value="1"/>
</dbReference>
<dbReference type="PANTHER" id="PTHR33516:SF2">
    <property type="entry name" value="LEXA REPRESSOR-RELATED"/>
    <property type="match status" value="1"/>
</dbReference>
<dbReference type="Pfam" id="PF01726">
    <property type="entry name" value="LexA_DNA_bind"/>
    <property type="match status" value="1"/>
</dbReference>
<dbReference type="Pfam" id="PF00717">
    <property type="entry name" value="Peptidase_S24"/>
    <property type="match status" value="1"/>
</dbReference>
<dbReference type="PRINTS" id="PR00726">
    <property type="entry name" value="LEXASERPTASE"/>
</dbReference>
<dbReference type="SUPFAM" id="SSF51306">
    <property type="entry name" value="LexA/Signal peptidase"/>
    <property type="match status" value="1"/>
</dbReference>
<dbReference type="SUPFAM" id="SSF46785">
    <property type="entry name" value="Winged helix' DNA-binding domain"/>
    <property type="match status" value="1"/>
</dbReference>
<proteinExistence type="inferred from homology"/>
<name>LEXA_ARTS2</name>
<feature type="chain" id="PRO_0000322714" description="LexA repressor">
    <location>
        <begin position="1"/>
        <end position="249"/>
    </location>
</feature>
<feature type="DNA-binding region" description="H-T-H motif" evidence="1">
    <location>
        <begin position="48"/>
        <end position="68"/>
    </location>
</feature>
<feature type="region of interest" description="Disordered" evidence="2">
    <location>
        <begin position="1"/>
        <end position="26"/>
    </location>
</feature>
<feature type="compositionally biased region" description="Polar residues" evidence="2">
    <location>
        <begin position="9"/>
        <end position="18"/>
    </location>
</feature>
<feature type="active site" description="For autocatalytic cleavage activity" evidence="1">
    <location>
        <position position="173"/>
    </location>
</feature>
<feature type="active site" description="For autocatalytic cleavage activity" evidence="1">
    <location>
        <position position="210"/>
    </location>
</feature>
<feature type="site" description="Cleavage; by autolysis" evidence="1">
    <location>
        <begin position="138"/>
        <end position="139"/>
    </location>
</feature>
<organism>
    <name type="scientific">Arthrobacter sp. (strain FB24)</name>
    <dbReference type="NCBI Taxonomy" id="290399"/>
    <lineage>
        <taxon>Bacteria</taxon>
        <taxon>Bacillati</taxon>
        <taxon>Actinomycetota</taxon>
        <taxon>Actinomycetes</taxon>
        <taxon>Micrococcales</taxon>
        <taxon>Micrococcaceae</taxon>
        <taxon>Arthrobacter</taxon>
    </lineage>
</organism>
<sequence>MAAQATGGRATQRSQQSPAKPKGLTVRQKKILETIQRSVNDNGYPPSMREIGDTVGLASLSSVTHQLSQLEKLGYLRRDPKRPRAMEVLMPLTLDEGTAKISGVEKPARLRTIGGLAVSELATATDTAMVPLVGRIAAGGPILADQVVEDVMPLPRQLVGHGELFMLKVTGDSMIDAAICDGDWVVVRRQSDAVNGDIVAALLDDEATVKTFRQRDGHTWLLPQNTQYEPILGDHANIMGKVVSVFRSL</sequence>
<evidence type="ECO:0000255" key="1">
    <source>
        <dbReference type="HAMAP-Rule" id="MF_00015"/>
    </source>
</evidence>
<evidence type="ECO:0000256" key="2">
    <source>
        <dbReference type="SAM" id="MobiDB-lite"/>
    </source>
</evidence>
<evidence type="ECO:0000305" key="3"/>
<accession>A0JUZ2</accession>
<protein>
    <recommendedName>
        <fullName evidence="1">LexA repressor</fullName>
        <ecNumber evidence="1">3.4.21.88</ecNumber>
    </recommendedName>
</protein>
<reference key="1">
    <citation type="journal article" date="2013" name="Stand. Genomic Sci.">
        <title>Complete genome sequence of Arthrobacter sp. strain FB24.</title>
        <authorList>
            <person name="Nakatsu C.H."/>
            <person name="Barabote R."/>
            <person name="Thompson S."/>
            <person name="Bruce D."/>
            <person name="Detter C."/>
            <person name="Brettin T."/>
            <person name="Han C."/>
            <person name="Beasley F."/>
            <person name="Chen W."/>
            <person name="Konopka A."/>
            <person name="Xie G."/>
        </authorList>
    </citation>
    <scope>NUCLEOTIDE SEQUENCE [LARGE SCALE GENOMIC DNA]</scope>
    <source>
        <strain>FB24</strain>
    </source>
</reference>